<keyword id="KW-0413">Isomerase</keyword>
<evidence type="ECO:0000255" key="1">
    <source>
        <dbReference type="HAMAP-Rule" id="MF_00675"/>
    </source>
</evidence>
<reference key="1">
    <citation type="journal article" date="2007" name="J. Bacteriol.">
        <title>The complete genome sequence of the lactic acid bacterial paradigm Lactococcus lactis subsp. cremoris MG1363.</title>
        <authorList>
            <person name="Wegmann U."/>
            <person name="O'Connell-Motherway M."/>
            <person name="Zomer A."/>
            <person name="Buist G."/>
            <person name="Shearman C."/>
            <person name="Canchaya C."/>
            <person name="Ventura M."/>
            <person name="Goesmann A."/>
            <person name="Gasson M.J."/>
            <person name="Kuipers O.P."/>
            <person name="van Sinderen D."/>
            <person name="Kok J."/>
        </authorList>
    </citation>
    <scope>NUCLEOTIDE SEQUENCE [LARGE SCALE GENOMIC DNA]</scope>
    <source>
        <strain>MG1363</strain>
    </source>
</reference>
<protein>
    <recommendedName>
        <fullName evidence="1">Uronate isomerase</fullName>
        <ecNumber evidence="1">5.3.1.12</ecNumber>
    </recommendedName>
    <alternativeName>
        <fullName evidence="1">Glucuronate isomerase</fullName>
    </alternativeName>
    <alternativeName>
        <fullName evidence="1">Uronic isomerase</fullName>
    </alternativeName>
</protein>
<name>UXAC_LACLM</name>
<sequence length="472" mass="54483">MKFLSEDFLLNNESAKLLFHEHAEKMPIIDYHCHLEPAEIYENKKYENLTQIWLGGDHYKWRLLRANGIPEKLITGDGDDYEKFLAFAKTLEKSLGNPIYEWTHLELKRFFHIDKLISSETEKEIWDEANQMLATDDFRPRALIKNSNVKVVCTTDDPVSKLSYHKSLAKEEKDFKVLPALRPDHLISITDGHFAEYLMELSAVSGIKIKDFKTMIKALEQRFEFFTSLGGRLSDHSLSTYTFAETKNVDLDSILQKAKENQTLTDLEYNQYITALILEIMKLNKKFDWTMQLHVNVNRSINGPALRKIGENTGFDSMGTQANISEELTKLFSKAAELEIIPKTILYSLNQNDWLELATLIGCFQGEGVQQLQLGAGWWFNDTAKGMEKQLEIFASQSLLPNFVGMLTDSRSFLSYPRHEYFRRVLCNFVGQLIESGRIPDDEALVGKMIEDISYNNVHDYFGFFKNEDSKQ</sequence>
<proteinExistence type="inferred from homology"/>
<feature type="chain" id="PRO_1000044770" description="Uronate isomerase">
    <location>
        <begin position="1"/>
        <end position="472"/>
    </location>
</feature>
<organism>
    <name type="scientific">Lactococcus lactis subsp. cremoris (strain MG1363)</name>
    <dbReference type="NCBI Taxonomy" id="416870"/>
    <lineage>
        <taxon>Bacteria</taxon>
        <taxon>Bacillati</taxon>
        <taxon>Bacillota</taxon>
        <taxon>Bacilli</taxon>
        <taxon>Lactobacillales</taxon>
        <taxon>Streptococcaceae</taxon>
        <taxon>Lactococcus</taxon>
        <taxon>Lactococcus cremoris subsp. cremoris</taxon>
    </lineage>
</organism>
<comment type="catalytic activity">
    <reaction evidence="1">
        <text>D-glucuronate = D-fructuronate</text>
        <dbReference type="Rhea" id="RHEA:13049"/>
        <dbReference type="ChEBI" id="CHEBI:58720"/>
        <dbReference type="ChEBI" id="CHEBI:59863"/>
        <dbReference type="EC" id="5.3.1.12"/>
    </reaction>
</comment>
<comment type="catalytic activity">
    <reaction evidence="1">
        <text>aldehydo-D-galacturonate = keto-D-tagaturonate</text>
        <dbReference type="Rhea" id="RHEA:27702"/>
        <dbReference type="ChEBI" id="CHEBI:12952"/>
        <dbReference type="ChEBI" id="CHEBI:17886"/>
        <dbReference type="EC" id="5.3.1.12"/>
    </reaction>
</comment>
<comment type="pathway">
    <text evidence="1">Carbohydrate metabolism; pentose and glucuronate interconversion.</text>
</comment>
<comment type="similarity">
    <text evidence="1">Belongs to the metallo-dependent hydrolases superfamily. Uronate isomerase family.</text>
</comment>
<dbReference type="EC" id="5.3.1.12" evidence="1"/>
<dbReference type="EMBL" id="AM406671">
    <property type="protein sequence ID" value="CAL97457.1"/>
    <property type="molecule type" value="Genomic_DNA"/>
</dbReference>
<dbReference type="RefSeq" id="WP_011834826.1">
    <property type="nucleotide sequence ID" value="NC_009004.1"/>
</dbReference>
<dbReference type="SMR" id="A2RJK5"/>
<dbReference type="STRING" id="416870.llmg_0862"/>
<dbReference type="KEGG" id="llm:llmg_0862"/>
<dbReference type="eggNOG" id="COG1904">
    <property type="taxonomic scope" value="Bacteria"/>
</dbReference>
<dbReference type="HOGENOM" id="CLU_044465_1_0_9"/>
<dbReference type="OrthoDB" id="9766564at2"/>
<dbReference type="PhylomeDB" id="A2RJK5"/>
<dbReference type="UniPathway" id="UPA00246"/>
<dbReference type="Proteomes" id="UP000000364">
    <property type="component" value="Chromosome"/>
</dbReference>
<dbReference type="GO" id="GO:0008880">
    <property type="term" value="F:glucuronate isomerase activity"/>
    <property type="evidence" value="ECO:0007669"/>
    <property type="project" value="UniProtKB-UniRule"/>
</dbReference>
<dbReference type="GO" id="GO:0019698">
    <property type="term" value="P:D-galacturonate catabolic process"/>
    <property type="evidence" value="ECO:0007669"/>
    <property type="project" value="TreeGrafter"/>
</dbReference>
<dbReference type="GO" id="GO:0042840">
    <property type="term" value="P:D-glucuronate catabolic process"/>
    <property type="evidence" value="ECO:0007669"/>
    <property type="project" value="TreeGrafter"/>
</dbReference>
<dbReference type="Gene3D" id="3.20.20.140">
    <property type="entry name" value="Metal-dependent hydrolases"/>
    <property type="match status" value="1"/>
</dbReference>
<dbReference type="Gene3D" id="1.10.2020.10">
    <property type="entry name" value="uronate isomerase, domain 2, chain A"/>
    <property type="match status" value="1"/>
</dbReference>
<dbReference type="HAMAP" id="MF_00675">
    <property type="entry name" value="UxaC"/>
    <property type="match status" value="1"/>
</dbReference>
<dbReference type="InterPro" id="IPR032466">
    <property type="entry name" value="Metal_Hydrolase"/>
</dbReference>
<dbReference type="InterPro" id="IPR003766">
    <property type="entry name" value="Uronate_isomerase"/>
</dbReference>
<dbReference type="NCBIfam" id="NF002794">
    <property type="entry name" value="PRK02925.1"/>
    <property type="match status" value="1"/>
</dbReference>
<dbReference type="PANTHER" id="PTHR30068">
    <property type="entry name" value="URONATE ISOMERASE"/>
    <property type="match status" value="1"/>
</dbReference>
<dbReference type="PANTHER" id="PTHR30068:SF4">
    <property type="entry name" value="URONATE ISOMERASE"/>
    <property type="match status" value="1"/>
</dbReference>
<dbReference type="Pfam" id="PF02614">
    <property type="entry name" value="UxaC"/>
    <property type="match status" value="1"/>
</dbReference>
<dbReference type="SUPFAM" id="SSF51556">
    <property type="entry name" value="Metallo-dependent hydrolases"/>
    <property type="match status" value="1"/>
</dbReference>
<gene>
    <name evidence="1" type="primary">uxaC</name>
    <name type="ordered locus">llmg_0862</name>
</gene>
<accession>A2RJK5</accession>